<proteinExistence type="evidence at transcript level"/>
<keyword id="KW-1015">Disulfide bond</keyword>
<keyword id="KW-0325">Glycoprotein</keyword>
<keyword id="KW-0372">Hormone</keyword>
<keyword id="KW-1185">Reference proteome</keyword>
<keyword id="KW-0964">Secreted</keyword>
<keyword id="KW-0732">Signal</keyword>
<evidence type="ECO:0000250" key="1"/>
<evidence type="ECO:0000255" key="2"/>
<evidence type="ECO:0000256" key="3">
    <source>
        <dbReference type="SAM" id="MobiDB-lite"/>
    </source>
</evidence>
<evidence type="ECO:0000305" key="4"/>
<accession>P51500</accession>
<feature type="signal peptide" evidence="1">
    <location>
        <begin position="1"/>
        <end position="20"/>
    </location>
</feature>
<feature type="chain" id="PRO_0000011675" description="Choriogonadotropin subunit beta">
    <location>
        <begin position="21"/>
        <end position="164"/>
    </location>
</feature>
<feature type="region of interest" description="Disordered" evidence="3">
    <location>
        <begin position="135"/>
        <end position="164"/>
    </location>
</feature>
<feature type="glycosylation site" description="N-linked (GlcNAc...) asparagine" evidence="2">
    <location>
        <position position="50"/>
    </location>
</feature>
<feature type="glycosylation site" description="O-linked (GalNAc...) serine" evidence="1">
    <location>
        <position position="140"/>
    </location>
</feature>
<feature type="glycosylation site" description="N-linked (GlcNAc...) asparagine" evidence="2">
    <location>
        <position position="146"/>
    </location>
</feature>
<feature type="glycosylation site" description="O-linked (GalNAc...) serine" evidence="1">
    <location>
        <position position="151"/>
    </location>
</feature>
<feature type="disulfide bond" evidence="1">
    <location>
        <begin position="29"/>
        <end position="77"/>
    </location>
</feature>
<feature type="disulfide bond" evidence="1">
    <location>
        <begin position="43"/>
        <end position="92"/>
    </location>
</feature>
<feature type="disulfide bond" evidence="1">
    <location>
        <begin position="46"/>
        <end position="130"/>
    </location>
</feature>
<feature type="disulfide bond" evidence="1">
    <location>
        <begin position="54"/>
        <end position="108"/>
    </location>
</feature>
<feature type="disulfide bond" evidence="1">
    <location>
        <begin position="58"/>
        <end position="110"/>
    </location>
</feature>
<feature type="disulfide bond" evidence="1">
    <location>
        <begin position="113"/>
        <end position="120"/>
    </location>
</feature>
<dbReference type="EMBL" id="U04447">
    <property type="protein sequence ID" value="AAC00029.1"/>
    <property type="molecule type" value="mRNA"/>
</dbReference>
<dbReference type="SMR" id="P51500"/>
<dbReference type="FunCoup" id="P51500">
    <property type="interactions" value="817"/>
</dbReference>
<dbReference type="STRING" id="9483.ENSCJAP00000000359"/>
<dbReference type="GlyCosmos" id="P51500">
    <property type="glycosylation" value="4 sites, No reported glycans"/>
</dbReference>
<dbReference type="Ensembl" id="ENSCJAT00000000391.4">
    <property type="protein sequence ID" value="ENSCJAP00000000359.2"/>
    <property type="gene ID" value="ENSCJAG00000000216.5"/>
</dbReference>
<dbReference type="eggNOG" id="ENOG502S49V">
    <property type="taxonomic scope" value="Eukaryota"/>
</dbReference>
<dbReference type="GeneTree" id="ENSGT00940000163162"/>
<dbReference type="InParanoid" id="P51500"/>
<dbReference type="OMA" id="YHELHFA"/>
<dbReference type="OrthoDB" id="9525526at2759"/>
<dbReference type="Proteomes" id="UP000008225">
    <property type="component" value="Chromosome 22"/>
</dbReference>
<dbReference type="Bgee" id="ENSCJAG00000000216">
    <property type="expression patterns" value="Expressed in frontal cortex and 2 other cell types or tissues"/>
</dbReference>
<dbReference type="GO" id="GO:0005737">
    <property type="term" value="C:cytoplasm"/>
    <property type="evidence" value="ECO:0007669"/>
    <property type="project" value="TreeGrafter"/>
</dbReference>
<dbReference type="GO" id="GO:0005615">
    <property type="term" value="C:extracellular space"/>
    <property type="evidence" value="ECO:0007669"/>
    <property type="project" value="TreeGrafter"/>
</dbReference>
<dbReference type="GO" id="GO:0005179">
    <property type="term" value="F:hormone activity"/>
    <property type="evidence" value="ECO:0007669"/>
    <property type="project" value="UniProtKB-KW"/>
</dbReference>
<dbReference type="GO" id="GO:0007186">
    <property type="term" value="P:G protein-coupled receptor signaling pathway"/>
    <property type="evidence" value="ECO:0007669"/>
    <property type="project" value="TreeGrafter"/>
</dbReference>
<dbReference type="CDD" id="cd00069">
    <property type="entry name" value="GHB_like"/>
    <property type="match status" value="1"/>
</dbReference>
<dbReference type="FunFam" id="2.10.90.10:FF:000007">
    <property type="entry name" value="Luteinizing hormone beta subunit"/>
    <property type="match status" value="1"/>
</dbReference>
<dbReference type="Gene3D" id="2.10.90.10">
    <property type="entry name" value="Cystine-knot cytokines"/>
    <property type="match status" value="1"/>
</dbReference>
<dbReference type="InterPro" id="IPR029034">
    <property type="entry name" value="Cystine-knot_cytokine"/>
</dbReference>
<dbReference type="InterPro" id="IPR006208">
    <property type="entry name" value="Glyco_hormone_CN"/>
</dbReference>
<dbReference type="InterPro" id="IPR001545">
    <property type="entry name" value="Gonadotropin_bsu"/>
</dbReference>
<dbReference type="InterPro" id="IPR018245">
    <property type="entry name" value="Gonadotropin_bsu_CS"/>
</dbReference>
<dbReference type="PANTHER" id="PTHR11515">
    <property type="entry name" value="GLYCOPROTEIN HORMONE BETA CHAIN"/>
    <property type="match status" value="1"/>
</dbReference>
<dbReference type="PANTHER" id="PTHR11515:SF11">
    <property type="entry name" value="LUTROPIN SUBUNIT BETA"/>
    <property type="match status" value="1"/>
</dbReference>
<dbReference type="Pfam" id="PF00007">
    <property type="entry name" value="Cys_knot"/>
    <property type="match status" value="1"/>
</dbReference>
<dbReference type="SMART" id="SM00068">
    <property type="entry name" value="GHB"/>
    <property type="match status" value="1"/>
</dbReference>
<dbReference type="SUPFAM" id="SSF57501">
    <property type="entry name" value="Cystine-knot cytokines"/>
    <property type="match status" value="1"/>
</dbReference>
<dbReference type="PROSITE" id="PS00261">
    <property type="entry name" value="GLYCO_HORMONE_BETA_1"/>
    <property type="match status" value="1"/>
</dbReference>
<dbReference type="PROSITE" id="PS00689">
    <property type="entry name" value="GLYCO_HORMONE_BETA_2"/>
    <property type="match status" value="1"/>
</dbReference>
<comment type="function">
    <text>Stimulates the ovaries to synthesize the steroids that are essential for the maintenance of pregnancy.</text>
</comment>
<comment type="subunit">
    <text>Heterodimer of a common alpha chain and a unique beta chain which confers biological specificity to thyrotropin, lutropin, follitropin and gonadotropin.</text>
</comment>
<comment type="subcellular location">
    <subcellularLocation>
        <location>Secreted</location>
    </subcellularLocation>
</comment>
<comment type="tissue specificity">
    <text>Placenta.</text>
</comment>
<comment type="similarity">
    <text evidence="4">Belongs to the glycoprotein hormones subunit beta family.</text>
</comment>
<gene>
    <name type="primary">CGB</name>
</gene>
<organism>
    <name type="scientific">Callithrix jacchus</name>
    <name type="common">White-tufted-ear marmoset</name>
    <dbReference type="NCBI Taxonomy" id="9483"/>
    <lineage>
        <taxon>Eukaryota</taxon>
        <taxon>Metazoa</taxon>
        <taxon>Chordata</taxon>
        <taxon>Craniata</taxon>
        <taxon>Vertebrata</taxon>
        <taxon>Euteleostomi</taxon>
        <taxon>Mammalia</taxon>
        <taxon>Eutheria</taxon>
        <taxon>Euarchontoglires</taxon>
        <taxon>Primates</taxon>
        <taxon>Haplorrhini</taxon>
        <taxon>Platyrrhini</taxon>
        <taxon>Cebidae</taxon>
        <taxon>Callitrichinae</taxon>
        <taxon>Callithrix</taxon>
        <taxon>Callithrix</taxon>
    </lineage>
</organism>
<reference key="1">
    <citation type="journal article" date="1995" name="Biol. Reprod.">
        <title>Luteinizing hormone/chorionic gonadotropin bioactivity in the common marmoset (Callithrix jacchus) is due to a chorionic gonadotropin molecule with a structure intermediate between human chorionic gonadotropin and human luteinizing hormone.</title>
        <authorList>
            <person name="Simula A.P."/>
            <person name="Amato F."/>
            <person name="Faast R."/>
            <person name="Lopata A."/>
            <person name="Berka J."/>
            <person name="Norman R.J."/>
        </authorList>
    </citation>
    <scope>NUCLEOTIDE SEQUENCE [MRNA]</scope>
    <source>
        <tissue>Placenta</tissue>
    </source>
</reference>
<sequence length="164" mass="17713">MEMLQGLLLCLLLSTGGAWASKEPLRPLCRPVNAILAAEKEGCPVCVAFNTTICAGYCSSMVRVLQTILPPLPQSVCNYHELRFTSVRLPGCRPGVDPVVSMPVALSCRCGLCRRSYSDCGSLRNEPLGCDYSTFQDSSSKDPPRNLTSPSQLLEPADPPLVPQ</sequence>
<protein>
    <recommendedName>
        <fullName>Choriogonadotropin subunit beta</fullName>
        <shortName>CG-beta</shortName>
    </recommendedName>
    <alternativeName>
        <fullName>Chorionic gonadotrophin chain beta</fullName>
    </alternativeName>
</protein>
<name>CGHB_CALJA</name>